<name>QUEC_PARC0</name>
<dbReference type="EC" id="6.3.4.20" evidence="1"/>
<dbReference type="EMBL" id="CP000512">
    <property type="protein sequence ID" value="ABM30751.1"/>
    <property type="molecule type" value="Genomic_DNA"/>
</dbReference>
<dbReference type="RefSeq" id="WP_011793329.1">
    <property type="nucleotide sequence ID" value="NC_008752.1"/>
</dbReference>
<dbReference type="SMR" id="A1TIG3"/>
<dbReference type="STRING" id="397945.Aave_0139"/>
<dbReference type="GeneID" id="79789941"/>
<dbReference type="KEGG" id="aav:Aave_0139"/>
<dbReference type="eggNOG" id="COG0603">
    <property type="taxonomic scope" value="Bacteria"/>
</dbReference>
<dbReference type="HOGENOM" id="CLU_081854_0_0_4"/>
<dbReference type="OrthoDB" id="9789567at2"/>
<dbReference type="UniPathway" id="UPA00391"/>
<dbReference type="Proteomes" id="UP000002596">
    <property type="component" value="Chromosome"/>
</dbReference>
<dbReference type="GO" id="GO:0005524">
    <property type="term" value="F:ATP binding"/>
    <property type="evidence" value="ECO:0007669"/>
    <property type="project" value="UniProtKB-UniRule"/>
</dbReference>
<dbReference type="GO" id="GO:0016879">
    <property type="term" value="F:ligase activity, forming carbon-nitrogen bonds"/>
    <property type="evidence" value="ECO:0007669"/>
    <property type="project" value="UniProtKB-UniRule"/>
</dbReference>
<dbReference type="GO" id="GO:0008270">
    <property type="term" value="F:zinc ion binding"/>
    <property type="evidence" value="ECO:0007669"/>
    <property type="project" value="UniProtKB-UniRule"/>
</dbReference>
<dbReference type="GO" id="GO:0008616">
    <property type="term" value="P:queuosine biosynthetic process"/>
    <property type="evidence" value="ECO:0007669"/>
    <property type="project" value="UniProtKB-UniRule"/>
</dbReference>
<dbReference type="CDD" id="cd01995">
    <property type="entry name" value="QueC-like"/>
    <property type="match status" value="1"/>
</dbReference>
<dbReference type="Gene3D" id="3.40.50.620">
    <property type="entry name" value="HUPs"/>
    <property type="match status" value="1"/>
</dbReference>
<dbReference type="HAMAP" id="MF_01633">
    <property type="entry name" value="QueC"/>
    <property type="match status" value="1"/>
</dbReference>
<dbReference type="InterPro" id="IPR018317">
    <property type="entry name" value="QueC"/>
</dbReference>
<dbReference type="InterPro" id="IPR014729">
    <property type="entry name" value="Rossmann-like_a/b/a_fold"/>
</dbReference>
<dbReference type="NCBIfam" id="TIGR00364">
    <property type="entry name" value="7-cyano-7-deazaguanine synthase QueC"/>
    <property type="match status" value="1"/>
</dbReference>
<dbReference type="PANTHER" id="PTHR42914">
    <property type="entry name" value="7-CYANO-7-DEAZAGUANINE SYNTHASE"/>
    <property type="match status" value="1"/>
</dbReference>
<dbReference type="PANTHER" id="PTHR42914:SF1">
    <property type="entry name" value="7-CYANO-7-DEAZAGUANINE SYNTHASE"/>
    <property type="match status" value="1"/>
</dbReference>
<dbReference type="Pfam" id="PF06508">
    <property type="entry name" value="QueC"/>
    <property type="match status" value="1"/>
</dbReference>
<dbReference type="PIRSF" id="PIRSF006293">
    <property type="entry name" value="ExsB"/>
    <property type="match status" value="1"/>
</dbReference>
<dbReference type="SUPFAM" id="SSF52402">
    <property type="entry name" value="Adenine nucleotide alpha hydrolases-like"/>
    <property type="match status" value="1"/>
</dbReference>
<accession>A1TIG3</accession>
<comment type="function">
    <text evidence="1">Catalyzes the ATP-dependent conversion of 7-carboxy-7-deazaguanine (CDG) to 7-cyano-7-deazaguanine (preQ(0)).</text>
</comment>
<comment type="catalytic activity">
    <reaction evidence="1">
        <text>7-carboxy-7-deazaguanine + NH4(+) + ATP = 7-cyano-7-deazaguanine + ADP + phosphate + H2O + H(+)</text>
        <dbReference type="Rhea" id="RHEA:27982"/>
        <dbReference type="ChEBI" id="CHEBI:15377"/>
        <dbReference type="ChEBI" id="CHEBI:15378"/>
        <dbReference type="ChEBI" id="CHEBI:28938"/>
        <dbReference type="ChEBI" id="CHEBI:30616"/>
        <dbReference type="ChEBI" id="CHEBI:43474"/>
        <dbReference type="ChEBI" id="CHEBI:45075"/>
        <dbReference type="ChEBI" id="CHEBI:61036"/>
        <dbReference type="ChEBI" id="CHEBI:456216"/>
        <dbReference type="EC" id="6.3.4.20"/>
    </reaction>
</comment>
<comment type="cofactor">
    <cofactor evidence="1">
        <name>Zn(2+)</name>
        <dbReference type="ChEBI" id="CHEBI:29105"/>
    </cofactor>
    <text evidence="1">Binds 1 zinc ion per subunit.</text>
</comment>
<comment type="pathway">
    <text evidence="1">Purine metabolism; 7-cyano-7-deazaguanine biosynthesis.</text>
</comment>
<comment type="similarity">
    <text evidence="1">Belongs to the QueC family.</text>
</comment>
<sequence>MRAGHALVLFSGGQDSTTCLAWALERFERVETIGFDYGQRHHVELEARTAVLAALRGRFPAWSARLGDDHMVDLAVLGQISDTALTRDTAIQMTEAGLPNTFVPGRNLLFFQLAAAVGYRRGLHTLVGGMCETDFSGYPDCRDDTLKALQVALSLGMGQRFTIETPLMWIDKAETWEMARQLGGDELVQLIVEDTHTCYHGVRGALHAWGHGCGECPACALRRAGHERWTAQHTA</sequence>
<gene>
    <name evidence="1" type="primary">queC</name>
    <name type="ordered locus">Aave_0139</name>
</gene>
<feature type="chain" id="PRO_0000336882" description="7-cyano-7-deazaguanine synthase">
    <location>
        <begin position="1"/>
        <end position="235"/>
    </location>
</feature>
<feature type="binding site" evidence="1">
    <location>
        <begin position="10"/>
        <end position="20"/>
    </location>
    <ligand>
        <name>ATP</name>
        <dbReference type="ChEBI" id="CHEBI:30616"/>
    </ligand>
</feature>
<feature type="binding site" evidence="1">
    <location>
        <position position="198"/>
    </location>
    <ligand>
        <name>Zn(2+)</name>
        <dbReference type="ChEBI" id="CHEBI:29105"/>
    </ligand>
</feature>
<feature type="binding site" evidence="1">
    <location>
        <position position="213"/>
    </location>
    <ligand>
        <name>Zn(2+)</name>
        <dbReference type="ChEBI" id="CHEBI:29105"/>
    </ligand>
</feature>
<feature type="binding site" evidence="1">
    <location>
        <position position="216"/>
    </location>
    <ligand>
        <name>Zn(2+)</name>
        <dbReference type="ChEBI" id="CHEBI:29105"/>
    </ligand>
</feature>
<feature type="binding site" evidence="1">
    <location>
        <position position="219"/>
    </location>
    <ligand>
        <name>Zn(2+)</name>
        <dbReference type="ChEBI" id="CHEBI:29105"/>
    </ligand>
</feature>
<reference key="1">
    <citation type="submission" date="2006-12" db="EMBL/GenBank/DDBJ databases">
        <title>Complete sequence of Acidovorax avenae subsp. citrulli AAC00-1.</title>
        <authorList>
            <person name="Copeland A."/>
            <person name="Lucas S."/>
            <person name="Lapidus A."/>
            <person name="Barry K."/>
            <person name="Detter J.C."/>
            <person name="Glavina del Rio T."/>
            <person name="Dalin E."/>
            <person name="Tice H."/>
            <person name="Pitluck S."/>
            <person name="Kiss H."/>
            <person name="Brettin T."/>
            <person name="Bruce D."/>
            <person name="Han C."/>
            <person name="Tapia R."/>
            <person name="Gilna P."/>
            <person name="Schmutz J."/>
            <person name="Larimer F."/>
            <person name="Land M."/>
            <person name="Hauser L."/>
            <person name="Kyrpides N."/>
            <person name="Kim E."/>
            <person name="Stahl D."/>
            <person name="Richardson P."/>
        </authorList>
    </citation>
    <scope>NUCLEOTIDE SEQUENCE [LARGE SCALE GENOMIC DNA]</scope>
    <source>
        <strain>AAC00-1</strain>
    </source>
</reference>
<organism>
    <name type="scientific">Paracidovorax citrulli (strain AAC00-1)</name>
    <name type="common">Acidovorax citrulli</name>
    <dbReference type="NCBI Taxonomy" id="397945"/>
    <lineage>
        <taxon>Bacteria</taxon>
        <taxon>Pseudomonadati</taxon>
        <taxon>Pseudomonadota</taxon>
        <taxon>Betaproteobacteria</taxon>
        <taxon>Burkholderiales</taxon>
        <taxon>Comamonadaceae</taxon>
        <taxon>Paracidovorax</taxon>
    </lineage>
</organism>
<protein>
    <recommendedName>
        <fullName evidence="1">7-cyano-7-deazaguanine synthase</fullName>
        <ecNumber evidence="1">6.3.4.20</ecNumber>
    </recommendedName>
    <alternativeName>
        <fullName evidence="1">7-cyano-7-carbaguanine synthase</fullName>
    </alternativeName>
    <alternativeName>
        <fullName evidence="1">PreQ(0) synthase</fullName>
    </alternativeName>
    <alternativeName>
        <fullName evidence="1">Queuosine biosynthesis protein QueC</fullName>
    </alternativeName>
</protein>
<keyword id="KW-0067">ATP-binding</keyword>
<keyword id="KW-0436">Ligase</keyword>
<keyword id="KW-0479">Metal-binding</keyword>
<keyword id="KW-0547">Nucleotide-binding</keyword>
<keyword id="KW-0671">Queuosine biosynthesis</keyword>
<keyword id="KW-0862">Zinc</keyword>
<proteinExistence type="inferred from homology"/>
<evidence type="ECO:0000255" key="1">
    <source>
        <dbReference type="HAMAP-Rule" id="MF_01633"/>
    </source>
</evidence>